<reference key="1">
    <citation type="journal article" date="2011" name="Genome Biol.">
        <title>Comparative and functional genomics provide insights into the pathogenicity of dermatophytic fungi.</title>
        <authorList>
            <person name="Burmester A."/>
            <person name="Shelest E."/>
            <person name="Gloeckner G."/>
            <person name="Heddergott C."/>
            <person name="Schindler S."/>
            <person name="Staib P."/>
            <person name="Heidel A."/>
            <person name="Felder M."/>
            <person name="Petzold A."/>
            <person name="Szafranski K."/>
            <person name="Feuermann M."/>
            <person name="Pedruzzi I."/>
            <person name="Priebe S."/>
            <person name="Groth M."/>
            <person name="Winkler R."/>
            <person name="Li W."/>
            <person name="Kniemeyer O."/>
            <person name="Schroeckh V."/>
            <person name="Hertweck C."/>
            <person name="Hube B."/>
            <person name="White T.C."/>
            <person name="Platzer M."/>
            <person name="Guthke R."/>
            <person name="Heitman J."/>
            <person name="Woestemeyer J."/>
            <person name="Zipfel P.F."/>
            <person name="Monod M."/>
            <person name="Brakhage A.A."/>
        </authorList>
    </citation>
    <scope>NUCLEOTIDE SEQUENCE [LARGE SCALE GENOMIC DNA]</scope>
    <source>
        <strain>ATCC MYA-4681 / CBS 112371</strain>
    </source>
</reference>
<reference key="2">
    <citation type="journal article" date="2011" name="Proteomics">
        <title>Identification of novel secreted proteases during extracellular proteolysis by dermatophytes at acidic pH.</title>
        <authorList>
            <person name="Sriranganadane D."/>
            <person name="Waridel P."/>
            <person name="Salamin K."/>
            <person name="Feuermann M."/>
            <person name="Mignon B."/>
            <person name="Staib P."/>
            <person name="Neuhaus J.M."/>
            <person name="Quadroni M."/>
            <person name="Monod M."/>
        </authorList>
    </citation>
    <scope>IDENTIFICATION BY MASS SPECTROMETRY</scope>
    <scope>SUBCELLULAR LOCATION</scope>
</reference>
<accession>D4ASH1</accession>
<accession>D4ASH0</accession>
<organism>
    <name type="scientific">Arthroderma benhamiae (strain ATCC MYA-4681 / CBS 112371)</name>
    <name type="common">Trichophyton mentagrophytes</name>
    <dbReference type="NCBI Taxonomy" id="663331"/>
    <lineage>
        <taxon>Eukaryota</taxon>
        <taxon>Fungi</taxon>
        <taxon>Dikarya</taxon>
        <taxon>Ascomycota</taxon>
        <taxon>Pezizomycotina</taxon>
        <taxon>Eurotiomycetes</taxon>
        <taxon>Eurotiomycetidae</taxon>
        <taxon>Onygenales</taxon>
        <taxon>Arthrodermataceae</taxon>
        <taxon>Trichophyton</taxon>
    </lineage>
</organism>
<keyword id="KW-1015">Disulfide bond</keyword>
<keyword id="KW-0378">Hydrolase</keyword>
<keyword id="KW-1185">Reference proteome</keyword>
<keyword id="KW-0964">Secreted</keyword>
<keyword id="KW-0732">Signal</keyword>
<evidence type="ECO:0000250" key="1">
    <source>
        <dbReference type="UniProtKB" id="P20261"/>
    </source>
</evidence>
<evidence type="ECO:0000255" key="2"/>
<evidence type="ECO:0000269" key="3">
    <source>
    </source>
</evidence>
<evidence type="ECO:0000305" key="4"/>
<comment type="catalytic activity">
    <reaction evidence="1">
        <text>a triacylglycerol + H2O = a diacylglycerol + a fatty acid + H(+)</text>
        <dbReference type="Rhea" id="RHEA:12044"/>
        <dbReference type="ChEBI" id="CHEBI:15377"/>
        <dbReference type="ChEBI" id="CHEBI:15378"/>
        <dbReference type="ChEBI" id="CHEBI:17855"/>
        <dbReference type="ChEBI" id="CHEBI:18035"/>
        <dbReference type="ChEBI" id="CHEBI:28868"/>
        <dbReference type="EC" id="3.1.1.3"/>
    </reaction>
</comment>
<comment type="subcellular location">
    <subcellularLocation>
        <location evidence="3">Secreted</location>
    </subcellularLocation>
</comment>
<comment type="similarity">
    <text evidence="4">Belongs to the type-B carboxylesterase/lipase family.</text>
</comment>
<comment type="sequence caution" evidence="4">
    <conflict type="erroneous gene model prediction">
        <sequence resource="EMBL-CDS" id="EFE33720"/>
    </conflict>
    <text>ARB_07185 and ARB_07186 have been merged.</text>
</comment>
<comment type="sequence caution" evidence="4">
    <conflict type="erroneous gene model prediction">
        <sequence resource="EMBL-CDS" id="EFE33721"/>
    </conflict>
    <text>ARB_07185 and ARB_07186 have been merged.</text>
</comment>
<feature type="signal peptide" evidence="2">
    <location>
        <begin position="1"/>
        <end position="20"/>
    </location>
</feature>
<feature type="chain" id="PRO_5001370716" description="Secreted lipase ARB07186/07185" evidence="2">
    <location>
        <begin position="21"/>
        <end position="563"/>
    </location>
</feature>
<feature type="active site" description="Acyl-ester intermediate" evidence="1">
    <location>
        <position position="215"/>
    </location>
</feature>
<feature type="disulfide bond" evidence="1">
    <location>
        <begin position="83"/>
        <end position="101"/>
    </location>
</feature>
<feature type="disulfide bond" evidence="1">
    <location>
        <begin position="268"/>
        <end position="281"/>
    </location>
</feature>
<proteinExistence type="evidence at protein level"/>
<dbReference type="EC" id="3.1.1.3" evidence="1"/>
<dbReference type="EMBL" id="ABSU01000008">
    <property type="protein sequence ID" value="EFE33721.1"/>
    <property type="status" value="ALT_SEQ"/>
    <property type="molecule type" value="Genomic_DNA"/>
</dbReference>
<dbReference type="EMBL" id="ABSU01000008">
    <property type="protein sequence ID" value="EFE33720.1"/>
    <property type="status" value="ALT_SEQ"/>
    <property type="molecule type" value="Genomic_DNA"/>
</dbReference>
<dbReference type="RefSeq" id="XP_003014623.1">
    <property type="nucleotide sequence ID" value="XM_003014577.1"/>
</dbReference>
<dbReference type="RefSeq" id="XP_003014624.1">
    <property type="nucleotide sequence ID" value="XM_003014578.1"/>
</dbReference>
<dbReference type="SMR" id="D4ASH1"/>
<dbReference type="ESTHER" id="trivh-d4d7k4">
    <property type="family name" value="Fungal_carboxylesterase_lipase"/>
</dbReference>
<dbReference type="GeneID" id="9520411"/>
<dbReference type="GeneID" id="9521781"/>
<dbReference type="KEGG" id="abe:ARB_07185"/>
<dbReference type="KEGG" id="abe:ARB_07186"/>
<dbReference type="eggNOG" id="KOG1516">
    <property type="taxonomic scope" value="Eukaryota"/>
</dbReference>
<dbReference type="HOGENOM" id="CLU_006586_4_1_1"/>
<dbReference type="OrthoDB" id="408631at2759"/>
<dbReference type="Proteomes" id="UP000008866">
    <property type="component" value="Unassembled WGS sequence"/>
</dbReference>
<dbReference type="GO" id="GO:0005576">
    <property type="term" value="C:extracellular region"/>
    <property type="evidence" value="ECO:0007669"/>
    <property type="project" value="UniProtKB-SubCell"/>
</dbReference>
<dbReference type="GO" id="GO:0004806">
    <property type="term" value="F:triacylglycerol lipase activity"/>
    <property type="evidence" value="ECO:0007669"/>
    <property type="project" value="UniProtKB-EC"/>
</dbReference>
<dbReference type="Gene3D" id="3.40.50.1820">
    <property type="entry name" value="alpha/beta hydrolase"/>
    <property type="match status" value="1"/>
</dbReference>
<dbReference type="InterPro" id="IPR029058">
    <property type="entry name" value="AB_hydrolase_fold"/>
</dbReference>
<dbReference type="InterPro" id="IPR050654">
    <property type="entry name" value="AChE-related_enzymes"/>
</dbReference>
<dbReference type="InterPro" id="IPR002018">
    <property type="entry name" value="CarbesteraseB"/>
</dbReference>
<dbReference type="InterPro" id="IPR019826">
    <property type="entry name" value="Carboxylesterase_B_AS"/>
</dbReference>
<dbReference type="PANTHER" id="PTHR43918">
    <property type="entry name" value="ACETYLCHOLINESTERASE"/>
    <property type="match status" value="1"/>
</dbReference>
<dbReference type="PANTHER" id="PTHR43918:SF4">
    <property type="entry name" value="CARBOXYLIC ESTER HYDROLASE"/>
    <property type="match status" value="1"/>
</dbReference>
<dbReference type="Pfam" id="PF00135">
    <property type="entry name" value="COesterase"/>
    <property type="match status" value="1"/>
</dbReference>
<dbReference type="SUPFAM" id="SSF53474">
    <property type="entry name" value="alpha/beta-Hydrolases"/>
    <property type="match status" value="1"/>
</dbReference>
<dbReference type="PROSITE" id="PS00122">
    <property type="entry name" value="CARBOXYLESTERASE_B_1"/>
    <property type="match status" value="1"/>
</dbReference>
<protein>
    <recommendedName>
        <fullName evidence="4">Secreted lipase ARB07186/07185</fullName>
        <ecNumber evidence="1">3.1.1.3</ecNumber>
    </recommendedName>
</protein>
<sequence>MAKYDFVMLWILTLTAAIAAARPMVVDKGRQITYTGLDRNGIEVFLGIPFGHDTGGKNRFKPPVAVVPPRGSHINATVYGPICPQELRAGSRGKLVISENCLNLNIGRPKNMTSHDKLAVMVTIYGGGYWVGHNQDPRWHADNMVKESVANGRPIIHVAMNYRLGVFGFAQTTALRTERSENAALRDQRLALEWVRDNIAAFGGDPKRVTIFGQSSGGVSVGMQMLAYGGKQPVPYQQGICQSQVLEPGITGNFTSTAMELVTDKANCTSGDFNSEAALACLRELDTETLLAAAIATYQNGVDHNIGDIWLPSVDGDFLPDAPSVLVAQRRFAPVTSMMGWCEDDVTRFVYPNITTSKGVADFIASYAPNVSRKNIDTLLKLYPTDEFPENKTAGLSRDFYRTARIFRDIVMTCEPFLVGEHAAAEGADAYFFSWNQTIAPSALGVLHGADLPYVYANLSAYIPPGSPIRPTASDYELSHRASRSWSTFGSTKEPSLPGHNTFKGFRKSFSKHNEILVFVAGGPNEGLSNIDDHGPHSVIGGQKLRERCAFINSPEMIHELRF</sequence>
<name>LIP1_ARTBC</name>
<gene>
    <name type="ORF">ARB_07185</name>
    <name type="ORF">ARB_07186</name>
</gene>